<gene>
    <name evidence="1" type="primary">nrdR</name>
    <name type="ordered locus">GSU1687</name>
</gene>
<dbReference type="EMBL" id="AE017180">
    <property type="protein sequence ID" value="AAR35065.1"/>
    <property type="molecule type" value="Genomic_DNA"/>
</dbReference>
<dbReference type="RefSeq" id="NP_952738.1">
    <property type="nucleotide sequence ID" value="NC_002939.5"/>
</dbReference>
<dbReference type="RefSeq" id="WP_010942330.1">
    <property type="nucleotide sequence ID" value="NC_002939.5"/>
</dbReference>
<dbReference type="SMR" id="Q74CI6"/>
<dbReference type="FunCoup" id="Q74CI6">
    <property type="interactions" value="282"/>
</dbReference>
<dbReference type="STRING" id="243231.GSU1687"/>
<dbReference type="EnsemblBacteria" id="AAR35065">
    <property type="protein sequence ID" value="AAR35065"/>
    <property type="gene ID" value="GSU1687"/>
</dbReference>
<dbReference type="KEGG" id="gsu:GSU1687"/>
<dbReference type="PATRIC" id="fig|243231.5.peg.1729"/>
<dbReference type="eggNOG" id="COG1327">
    <property type="taxonomic scope" value="Bacteria"/>
</dbReference>
<dbReference type="HOGENOM" id="CLU_108412_0_0_7"/>
<dbReference type="InParanoid" id="Q74CI6"/>
<dbReference type="OrthoDB" id="9807461at2"/>
<dbReference type="Proteomes" id="UP000000577">
    <property type="component" value="Chromosome"/>
</dbReference>
<dbReference type="GO" id="GO:0005524">
    <property type="term" value="F:ATP binding"/>
    <property type="evidence" value="ECO:0007669"/>
    <property type="project" value="UniProtKB-KW"/>
</dbReference>
<dbReference type="GO" id="GO:0003690">
    <property type="term" value="F:double-stranded DNA binding"/>
    <property type="evidence" value="ECO:0000318"/>
    <property type="project" value="GO_Central"/>
</dbReference>
<dbReference type="GO" id="GO:0008270">
    <property type="term" value="F:zinc ion binding"/>
    <property type="evidence" value="ECO:0007669"/>
    <property type="project" value="UniProtKB-UniRule"/>
</dbReference>
<dbReference type="GO" id="GO:0045892">
    <property type="term" value="P:negative regulation of DNA-templated transcription"/>
    <property type="evidence" value="ECO:0000318"/>
    <property type="project" value="GO_Central"/>
</dbReference>
<dbReference type="HAMAP" id="MF_00440">
    <property type="entry name" value="NrdR"/>
    <property type="match status" value="1"/>
</dbReference>
<dbReference type="InterPro" id="IPR005144">
    <property type="entry name" value="ATP-cone_dom"/>
</dbReference>
<dbReference type="InterPro" id="IPR055173">
    <property type="entry name" value="NrdR-like_N"/>
</dbReference>
<dbReference type="InterPro" id="IPR003796">
    <property type="entry name" value="RNR_NrdR-like"/>
</dbReference>
<dbReference type="NCBIfam" id="TIGR00244">
    <property type="entry name" value="transcriptional regulator NrdR"/>
    <property type="match status" value="1"/>
</dbReference>
<dbReference type="PANTHER" id="PTHR30455">
    <property type="entry name" value="TRANSCRIPTIONAL REPRESSOR NRDR"/>
    <property type="match status" value="1"/>
</dbReference>
<dbReference type="PANTHER" id="PTHR30455:SF2">
    <property type="entry name" value="TRANSCRIPTIONAL REPRESSOR NRDR"/>
    <property type="match status" value="1"/>
</dbReference>
<dbReference type="Pfam" id="PF03477">
    <property type="entry name" value="ATP-cone"/>
    <property type="match status" value="1"/>
</dbReference>
<dbReference type="Pfam" id="PF22811">
    <property type="entry name" value="Zn_ribbon_NrdR"/>
    <property type="match status" value="1"/>
</dbReference>
<dbReference type="PROSITE" id="PS51161">
    <property type="entry name" value="ATP_CONE"/>
    <property type="match status" value="1"/>
</dbReference>
<reference key="1">
    <citation type="journal article" date="2003" name="Science">
        <title>Genome of Geobacter sulfurreducens: metal reduction in subsurface environments.</title>
        <authorList>
            <person name="Methe B.A."/>
            <person name="Nelson K.E."/>
            <person name="Eisen J.A."/>
            <person name="Paulsen I.T."/>
            <person name="Nelson W.C."/>
            <person name="Heidelberg J.F."/>
            <person name="Wu D."/>
            <person name="Wu M."/>
            <person name="Ward N.L."/>
            <person name="Beanan M.J."/>
            <person name="Dodson R.J."/>
            <person name="Madupu R."/>
            <person name="Brinkac L.M."/>
            <person name="Daugherty S.C."/>
            <person name="DeBoy R.T."/>
            <person name="Durkin A.S."/>
            <person name="Gwinn M.L."/>
            <person name="Kolonay J.F."/>
            <person name="Sullivan S.A."/>
            <person name="Haft D.H."/>
            <person name="Selengut J."/>
            <person name="Davidsen T.M."/>
            <person name="Zafar N."/>
            <person name="White O."/>
            <person name="Tran B."/>
            <person name="Romero C."/>
            <person name="Forberger H.A."/>
            <person name="Weidman J.F."/>
            <person name="Khouri H.M."/>
            <person name="Feldblyum T.V."/>
            <person name="Utterback T.R."/>
            <person name="Van Aken S.E."/>
            <person name="Lovley D.R."/>
            <person name="Fraser C.M."/>
        </authorList>
    </citation>
    <scope>NUCLEOTIDE SEQUENCE [LARGE SCALE GENOMIC DNA]</scope>
    <source>
        <strain>ATCC 51573 / DSM 12127 / PCA</strain>
    </source>
</reference>
<name>NRDR_GEOSL</name>
<proteinExistence type="inferred from homology"/>
<sequence length="150" mass="17426">MKCPFCGQLDSKVVDSRPDKGGAAIRRRRECESCGKRFTTHERIEEVLPLVLKKDGRREPFDRLKLIAGIQKACEKRQVSRETIERLVDRLEARLPELGEKEVPSTTIGEWVMTELHDIDEVAYVRFASVYRSFKDVNEFMSELQDLLKK</sequence>
<feature type="chain" id="PRO_0000182301" description="Transcriptional repressor NrdR">
    <location>
        <begin position="1"/>
        <end position="150"/>
    </location>
</feature>
<feature type="domain" description="ATP-cone" evidence="1">
    <location>
        <begin position="49"/>
        <end position="139"/>
    </location>
</feature>
<feature type="zinc finger region" evidence="1">
    <location>
        <begin position="3"/>
        <end position="34"/>
    </location>
</feature>
<comment type="function">
    <text evidence="1">Negatively regulates transcription of bacterial ribonucleotide reductase nrd genes and operons by binding to NrdR-boxes.</text>
</comment>
<comment type="cofactor">
    <cofactor evidence="1">
        <name>Zn(2+)</name>
        <dbReference type="ChEBI" id="CHEBI:29105"/>
    </cofactor>
    <text evidence="1">Binds 1 zinc ion.</text>
</comment>
<comment type="similarity">
    <text evidence="1">Belongs to the NrdR family.</text>
</comment>
<evidence type="ECO:0000255" key="1">
    <source>
        <dbReference type="HAMAP-Rule" id="MF_00440"/>
    </source>
</evidence>
<protein>
    <recommendedName>
        <fullName evidence="1">Transcriptional repressor NrdR</fullName>
    </recommendedName>
</protein>
<keyword id="KW-0067">ATP-binding</keyword>
<keyword id="KW-0238">DNA-binding</keyword>
<keyword id="KW-0479">Metal-binding</keyword>
<keyword id="KW-0547">Nucleotide-binding</keyword>
<keyword id="KW-1185">Reference proteome</keyword>
<keyword id="KW-0678">Repressor</keyword>
<keyword id="KW-0804">Transcription</keyword>
<keyword id="KW-0805">Transcription regulation</keyword>
<keyword id="KW-0862">Zinc</keyword>
<keyword id="KW-0863">Zinc-finger</keyword>
<accession>Q74CI6</accession>
<organism>
    <name type="scientific">Geobacter sulfurreducens (strain ATCC 51573 / DSM 12127 / PCA)</name>
    <dbReference type="NCBI Taxonomy" id="243231"/>
    <lineage>
        <taxon>Bacteria</taxon>
        <taxon>Pseudomonadati</taxon>
        <taxon>Thermodesulfobacteriota</taxon>
        <taxon>Desulfuromonadia</taxon>
        <taxon>Geobacterales</taxon>
        <taxon>Geobacteraceae</taxon>
        <taxon>Geobacter</taxon>
    </lineage>
</organism>